<dbReference type="EC" id="3.6.5.3" evidence="2"/>
<dbReference type="EMBL" id="AE003852">
    <property type="protein sequence ID" value="AAF93535.1"/>
    <property type="molecule type" value="Genomic_DNA"/>
</dbReference>
<dbReference type="PIR" id="D82332">
    <property type="entry name" value="D82332"/>
</dbReference>
<dbReference type="RefSeq" id="NP_230016.1">
    <property type="nucleotide sequence ID" value="NC_002505.1"/>
</dbReference>
<dbReference type="SMR" id="Q9KUZ6"/>
<dbReference type="STRING" id="243277.VC_0362"/>
<dbReference type="DNASU" id="2615041"/>
<dbReference type="EnsemblBacteria" id="AAF93535">
    <property type="protein sequence ID" value="AAF93535"/>
    <property type="gene ID" value="VC_0362"/>
</dbReference>
<dbReference type="KEGG" id="vch:VC_0362"/>
<dbReference type="PATRIC" id="fig|243277.26.peg.339"/>
<dbReference type="eggNOG" id="COG0050">
    <property type="taxonomic scope" value="Bacteria"/>
</dbReference>
<dbReference type="HOGENOM" id="CLU_007265_0_0_6"/>
<dbReference type="Proteomes" id="UP000000584">
    <property type="component" value="Chromosome 1"/>
</dbReference>
<dbReference type="GO" id="GO:0005737">
    <property type="term" value="C:cytoplasm"/>
    <property type="evidence" value="ECO:0007669"/>
    <property type="project" value="UniProtKB-SubCell"/>
</dbReference>
<dbReference type="GO" id="GO:0005525">
    <property type="term" value="F:GTP binding"/>
    <property type="evidence" value="ECO:0007669"/>
    <property type="project" value="UniProtKB-UniRule"/>
</dbReference>
<dbReference type="GO" id="GO:0003924">
    <property type="term" value="F:GTPase activity"/>
    <property type="evidence" value="ECO:0007669"/>
    <property type="project" value="InterPro"/>
</dbReference>
<dbReference type="GO" id="GO:0097216">
    <property type="term" value="F:guanosine tetraphosphate binding"/>
    <property type="evidence" value="ECO:0007669"/>
    <property type="project" value="UniProtKB-ARBA"/>
</dbReference>
<dbReference type="GO" id="GO:0003746">
    <property type="term" value="F:translation elongation factor activity"/>
    <property type="evidence" value="ECO:0000318"/>
    <property type="project" value="GO_Central"/>
</dbReference>
<dbReference type="GO" id="GO:0006414">
    <property type="term" value="P:translational elongation"/>
    <property type="evidence" value="ECO:0000318"/>
    <property type="project" value="GO_Central"/>
</dbReference>
<dbReference type="CDD" id="cd01884">
    <property type="entry name" value="EF_Tu"/>
    <property type="match status" value="1"/>
</dbReference>
<dbReference type="CDD" id="cd03697">
    <property type="entry name" value="EFTU_II"/>
    <property type="match status" value="1"/>
</dbReference>
<dbReference type="CDD" id="cd03707">
    <property type="entry name" value="EFTU_III"/>
    <property type="match status" value="1"/>
</dbReference>
<dbReference type="FunFam" id="2.40.30.10:FF:000001">
    <property type="entry name" value="Elongation factor Tu"/>
    <property type="match status" value="1"/>
</dbReference>
<dbReference type="FunFam" id="3.40.50.300:FF:000003">
    <property type="entry name" value="Elongation factor Tu"/>
    <property type="match status" value="1"/>
</dbReference>
<dbReference type="Gene3D" id="3.40.50.300">
    <property type="entry name" value="P-loop containing nucleotide triphosphate hydrolases"/>
    <property type="match status" value="1"/>
</dbReference>
<dbReference type="Gene3D" id="2.40.30.10">
    <property type="entry name" value="Translation factors"/>
    <property type="match status" value="2"/>
</dbReference>
<dbReference type="HAMAP" id="MF_00118_B">
    <property type="entry name" value="EF_Tu_B"/>
    <property type="match status" value="1"/>
</dbReference>
<dbReference type="InterPro" id="IPR041709">
    <property type="entry name" value="EF-Tu_GTP-bd"/>
</dbReference>
<dbReference type="InterPro" id="IPR050055">
    <property type="entry name" value="EF-Tu_GTPase"/>
</dbReference>
<dbReference type="InterPro" id="IPR004161">
    <property type="entry name" value="EFTu-like_2"/>
</dbReference>
<dbReference type="InterPro" id="IPR033720">
    <property type="entry name" value="EFTU_2"/>
</dbReference>
<dbReference type="InterPro" id="IPR031157">
    <property type="entry name" value="G_TR_CS"/>
</dbReference>
<dbReference type="InterPro" id="IPR027417">
    <property type="entry name" value="P-loop_NTPase"/>
</dbReference>
<dbReference type="InterPro" id="IPR005225">
    <property type="entry name" value="Small_GTP-bd"/>
</dbReference>
<dbReference type="InterPro" id="IPR000795">
    <property type="entry name" value="T_Tr_GTP-bd_dom"/>
</dbReference>
<dbReference type="InterPro" id="IPR009000">
    <property type="entry name" value="Transl_B-barrel_sf"/>
</dbReference>
<dbReference type="InterPro" id="IPR009001">
    <property type="entry name" value="Transl_elong_EF1A/Init_IF2_C"/>
</dbReference>
<dbReference type="InterPro" id="IPR004541">
    <property type="entry name" value="Transl_elong_EFTu/EF1A_bac/org"/>
</dbReference>
<dbReference type="InterPro" id="IPR004160">
    <property type="entry name" value="Transl_elong_EFTu/EF1A_C"/>
</dbReference>
<dbReference type="NCBIfam" id="TIGR00485">
    <property type="entry name" value="EF-Tu"/>
    <property type="match status" value="1"/>
</dbReference>
<dbReference type="NCBIfam" id="NF000766">
    <property type="entry name" value="PRK00049.1"/>
    <property type="match status" value="1"/>
</dbReference>
<dbReference type="NCBIfam" id="NF009372">
    <property type="entry name" value="PRK12735.1"/>
    <property type="match status" value="1"/>
</dbReference>
<dbReference type="NCBIfam" id="NF009373">
    <property type="entry name" value="PRK12736.1"/>
    <property type="match status" value="1"/>
</dbReference>
<dbReference type="NCBIfam" id="TIGR00231">
    <property type="entry name" value="small_GTP"/>
    <property type="match status" value="1"/>
</dbReference>
<dbReference type="PANTHER" id="PTHR43721:SF22">
    <property type="entry name" value="ELONGATION FACTOR TU, MITOCHONDRIAL"/>
    <property type="match status" value="1"/>
</dbReference>
<dbReference type="PANTHER" id="PTHR43721">
    <property type="entry name" value="ELONGATION FACTOR TU-RELATED"/>
    <property type="match status" value="1"/>
</dbReference>
<dbReference type="Pfam" id="PF00009">
    <property type="entry name" value="GTP_EFTU"/>
    <property type="match status" value="1"/>
</dbReference>
<dbReference type="Pfam" id="PF03144">
    <property type="entry name" value="GTP_EFTU_D2"/>
    <property type="match status" value="1"/>
</dbReference>
<dbReference type="Pfam" id="PF03143">
    <property type="entry name" value="GTP_EFTU_D3"/>
    <property type="match status" value="1"/>
</dbReference>
<dbReference type="PRINTS" id="PR00315">
    <property type="entry name" value="ELONGATNFCT"/>
</dbReference>
<dbReference type="SUPFAM" id="SSF50465">
    <property type="entry name" value="EF-Tu/eEF-1alpha/eIF2-gamma C-terminal domain"/>
    <property type="match status" value="1"/>
</dbReference>
<dbReference type="SUPFAM" id="SSF52540">
    <property type="entry name" value="P-loop containing nucleoside triphosphate hydrolases"/>
    <property type="match status" value="1"/>
</dbReference>
<dbReference type="SUPFAM" id="SSF50447">
    <property type="entry name" value="Translation proteins"/>
    <property type="match status" value="1"/>
</dbReference>
<dbReference type="PROSITE" id="PS00301">
    <property type="entry name" value="G_TR_1"/>
    <property type="match status" value="1"/>
</dbReference>
<dbReference type="PROSITE" id="PS51722">
    <property type="entry name" value="G_TR_2"/>
    <property type="match status" value="1"/>
</dbReference>
<protein>
    <recommendedName>
        <fullName evidence="2">Elongation factor Tu-B</fullName>
        <shortName evidence="2">EF-Tu-B</shortName>
        <ecNumber evidence="2">3.6.5.3</ecNumber>
    </recommendedName>
</protein>
<gene>
    <name evidence="2" type="primary">tufB</name>
    <name type="ordered locus">VC_0362</name>
</gene>
<comment type="function">
    <text evidence="2">GTP hydrolase that promotes the GTP-dependent binding of aminoacyl-tRNA to the A-site of ribosomes during protein biosynthesis.</text>
</comment>
<comment type="catalytic activity">
    <reaction evidence="2">
        <text>GTP + H2O = GDP + phosphate + H(+)</text>
        <dbReference type="Rhea" id="RHEA:19669"/>
        <dbReference type="ChEBI" id="CHEBI:15377"/>
        <dbReference type="ChEBI" id="CHEBI:15378"/>
        <dbReference type="ChEBI" id="CHEBI:37565"/>
        <dbReference type="ChEBI" id="CHEBI:43474"/>
        <dbReference type="ChEBI" id="CHEBI:58189"/>
        <dbReference type="EC" id="3.6.5.3"/>
    </reaction>
    <physiologicalReaction direction="left-to-right" evidence="2">
        <dbReference type="Rhea" id="RHEA:19670"/>
    </physiologicalReaction>
</comment>
<comment type="subunit">
    <text evidence="2">Monomer.</text>
</comment>
<comment type="subcellular location">
    <subcellularLocation>
        <location evidence="2">Cytoplasm</location>
    </subcellularLocation>
</comment>
<comment type="similarity">
    <text evidence="2">Belongs to the TRAFAC class translation factor GTPase superfamily. Classic translation factor GTPase family. EF-Tu/EF-1A subfamily.</text>
</comment>
<evidence type="ECO:0000250" key="1"/>
<evidence type="ECO:0000255" key="2">
    <source>
        <dbReference type="HAMAP-Rule" id="MF_00118"/>
    </source>
</evidence>
<name>EFTU2_VIBCH</name>
<sequence length="394" mass="43126">MSKEKFERTKPHVNVGTIGHVDHGKTTLTAAICTVLAKVYGGKARDFASIDNAPEERERGITINTSHVEYDTPNRHYAHVDCPGHADYVKNMITGAAQMDGGILVVAATDGPMPQTREHILLGRQVGIPYIIVFMNKCDMVDDEELLELVEMEVRELLSEYDFPGDDLPVIQGSALGALNGEAQWEAKIVELAEALDTYIPEPERAVDMAFLMPIEDVFSIQGRGTVVTGRIERGILKVGDEVAIVGIKETVKTTCTGVEMFRKLLDEGRAGENVGALLRGTKREEVERGQVLAKPGSITPHTKFESEVYVLSKDEGGRHTPFFKGYRPQFYFRTTDVTGSIELPEGVEMVMPGDNVKMVVDLIAPIAMDEGLRFAIREGGRTVGAGVVAKIIA</sequence>
<reference key="1">
    <citation type="journal article" date="2000" name="Nature">
        <title>DNA sequence of both chromosomes of the cholera pathogen Vibrio cholerae.</title>
        <authorList>
            <person name="Heidelberg J.F."/>
            <person name="Eisen J.A."/>
            <person name="Nelson W.C."/>
            <person name="Clayton R.A."/>
            <person name="Gwinn M.L."/>
            <person name="Dodson R.J."/>
            <person name="Haft D.H."/>
            <person name="Hickey E.K."/>
            <person name="Peterson J.D."/>
            <person name="Umayam L.A."/>
            <person name="Gill S.R."/>
            <person name="Nelson K.E."/>
            <person name="Read T.D."/>
            <person name="Tettelin H."/>
            <person name="Richardson D.L."/>
            <person name="Ermolaeva M.D."/>
            <person name="Vamathevan J.J."/>
            <person name="Bass S."/>
            <person name="Qin H."/>
            <person name="Dragoi I."/>
            <person name="Sellers P."/>
            <person name="McDonald L.A."/>
            <person name="Utterback T.R."/>
            <person name="Fleischmann R.D."/>
            <person name="Nierman W.C."/>
            <person name="White O."/>
            <person name="Salzberg S.L."/>
            <person name="Smith H.O."/>
            <person name="Colwell R.R."/>
            <person name="Mekalanos J.J."/>
            <person name="Venter J.C."/>
            <person name="Fraser C.M."/>
        </authorList>
    </citation>
    <scope>NUCLEOTIDE SEQUENCE [LARGE SCALE GENOMIC DNA]</scope>
    <source>
        <strain>ATCC 39315 / El Tor Inaba N16961</strain>
    </source>
</reference>
<accession>Q9KUZ6</accession>
<proteinExistence type="inferred from homology"/>
<organism>
    <name type="scientific">Vibrio cholerae serotype O1 (strain ATCC 39315 / El Tor Inaba N16961)</name>
    <dbReference type="NCBI Taxonomy" id="243277"/>
    <lineage>
        <taxon>Bacteria</taxon>
        <taxon>Pseudomonadati</taxon>
        <taxon>Pseudomonadota</taxon>
        <taxon>Gammaproteobacteria</taxon>
        <taxon>Vibrionales</taxon>
        <taxon>Vibrionaceae</taxon>
        <taxon>Vibrio</taxon>
    </lineage>
</organism>
<keyword id="KW-0963">Cytoplasm</keyword>
<keyword id="KW-0251">Elongation factor</keyword>
<keyword id="KW-0342">GTP-binding</keyword>
<keyword id="KW-0378">Hydrolase</keyword>
<keyword id="KW-0460">Magnesium</keyword>
<keyword id="KW-0479">Metal-binding</keyword>
<keyword id="KW-0547">Nucleotide-binding</keyword>
<keyword id="KW-0648">Protein biosynthesis</keyword>
<keyword id="KW-1185">Reference proteome</keyword>
<feature type="chain" id="PRO_0000091432" description="Elongation factor Tu-B">
    <location>
        <begin position="1"/>
        <end position="394"/>
    </location>
</feature>
<feature type="domain" description="tr-type G">
    <location>
        <begin position="10"/>
        <end position="204"/>
    </location>
</feature>
<feature type="region of interest" description="G1" evidence="1">
    <location>
        <begin position="19"/>
        <end position="26"/>
    </location>
</feature>
<feature type="region of interest" description="G2" evidence="1">
    <location>
        <begin position="60"/>
        <end position="64"/>
    </location>
</feature>
<feature type="region of interest" description="G3" evidence="1">
    <location>
        <begin position="81"/>
        <end position="84"/>
    </location>
</feature>
<feature type="region of interest" description="G4" evidence="1">
    <location>
        <begin position="136"/>
        <end position="139"/>
    </location>
</feature>
<feature type="region of interest" description="G5" evidence="1">
    <location>
        <begin position="174"/>
        <end position="176"/>
    </location>
</feature>
<feature type="binding site" evidence="2">
    <location>
        <begin position="19"/>
        <end position="26"/>
    </location>
    <ligand>
        <name>GTP</name>
        <dbReference type="ChEBI" id="CHEBI:37565"/>
    </ligand>
</feature>
<feature type="binding site" evidence="2">
    <location>
        <position position="26"/>
    </location>
    <ligand>
        <name>Mg(2+)</name>
        <dbReference type="ChEBI" id="CHEBI:18420"/>
    </ligand>
</feature>
<feature type="binding site" evidence="2">
    <location>
        <begin position="81"/>
        <end position="85"/>
    </location>
    <ligand>
        <name>GTP</name>
        <dbReference type="ChEBI" id="CHEBI:37565"/>
    </ligand>
</feature>
<feature type="binding site" evidence="2">
    <location>
        <begin position="136"/>
        <end position="139"/>
    </location>
    <ligand>
        <name>GTP</name>
        <dbReference type="ChEBI" id="CHEBI:37565"/>
    </ligand>
</feature>